<sequence>MSVRLVLAKGREKSLLRRHPWVFSGAVARMEGKASLGETIDIVDHQGKWLARGAYSPASQIRARVWTFDPSESIDIAFFSRRLQQAQKWRDWLAQKDGLDSYRLIAGESDGLPGITIDRFGNFLVLQLLSAGAEYQRAALISALQTLYPECSIYDRSDVAVRKKEGMELTQGPVTGELPPALLPIEEHGMKLLVDIQHGHKTGYYLDQRDSRLATRRYVENKRVLNCFSYTGGFAVSALMGGCSQVVSVDTSQEALDIARQNVELNKLDLSKAEFVRDDVFKLLRTYRDRGEKFDVIVMDPPKFVENKSQLMGACRGYKDINMLAIQLLNEGGILLTFSCSGLMTSDLFQKIIADAAIDAGRDVQFIEQFRQAADHPVIATYPEGLYLKGFACRVM</sequence>
<name>RLMI_ECOLI</name>
<accession>P75876</accession>
<accession>Q9R7Q2</accession>
<organism>
    <name type="scientific">Escherichia coli (strain K12)</name>
    <dbReference type="NCBI Taxonomy" id="83333"/>
    <lineage>
        <taxon>Bacteria</taxon>
        <taxon>Pseudomonadati</taxon>
        <taxon>Pseudomonadota</taxon>
        <taxon>Gammaproteobacteria</taxon>
        <taxon>Enterobacterales</taxon>
        <taxon>Enterobacteriaceae</taxon>
        <taxon>Escherichia</taxon>
    </lineage>
</organism>
<gene>
    <name type="primary">rlmI</name>
    <name type="synonym">yccW</name>
    <name type="ordered locus">b0967</name>
    <name type="ordered locus">JW5898</name>
</gene>
<proteinExistence type="evidence at protein level"/>
<comment type="function">
    <text evidence="1">Specifically methylates the cytosine at position 1962 (m5C1962) of 23S rRNA. Methylation occurs before assembly of 23S rRNA into 50S subunits.</text>
</comment>
<comment type="catalytic activity">
    <reaction evidence="1">
        <text>cytidine(1962) in 23S rRNA + S-adenosyl-L-methionine = 5-methylcytidine(1962) in 23S rRNA + S-adenosyl-L-homocysteine + H(+)</text>
        <dbReference type="Rhea" id="RHEA:42912"/>
        <dbReference type="Rhea" id="RHEA-COMP:10382"/>
        <dbReference type="Rhea" id="RHEA-COMP:10386"/>
        <dbReference type="ChEBI" id="CHEBI:15378"/>
        <dbReference type="ChEBI" id="CHEBI:57856"/>
        <dbReference type="ChEBI" id="CHEBI:59789"/>
        <dbReference type="ChEBI" id="CHEBI:74483"/>
        <dbReference type="ChEBI" id="CHEBI:82748"/>
        <dbReference type="EC" id="2.1.1.191"/>
    </reaction>
</comment>
<comment type="subunit">
    <text evidence="2">Homodimer.</text>
</comment>
<comment type="subcellular location">
    <subcellularLocation>
        <location evidence="3">Cytoplasm</location>
    </subcellularLocation>
</comment>
<comment type="similarity">
    <text evidence="3">Belongs to the methyltransferase superfamily. RlmI family.</text>
</comment>
<comment type="sequence caution" evidence="3">
    <conflict type="erroneous initiation">
        <sequence resource="EMBL-CDS" id="BAA35732"/>
    </conflict>
    <text>Truncated N-terminus.</text>
</comment>
<protein>
    <recommendedName>
        <fullName>Ribosomal RNA large subunit methyltransferase I</fullName>
        <ecNumber>2.1.1.191</ecNumber>
    </recommendedName>
    <alternativeName>
        <fullName>23S rRNA m5C1962 methyltransferase</fullName>
    </alternativeName>
    <alternativeName>
        <fullName>rRNA (cytosine-C(5)-)-methyltransferase RlmI</fullName>
    </alternativeName>
</protein>
<keyword id="KW-0002">3D-structure</keyword>
<keyword id="KW-0963">Cytoplasm</keyword>
<keyword id="KW-0489">Methyltransferase</keyword>
<keyword id="KW-1185">Reference proteome</keyword>
<keyword id="KW-0694">RNA-binding</keyword>
<keyword id="KW-0698">rRNA processing</keyword>
<keyword id="KW-0949">S-adenosyl-L-methionine</keyword>
<keyword id="KW-0808">Transferase</keyword>
<reference key="1">
    <citation type="journal article" date="1996" name="DNA Res.">
        <title>A 718-kb DNA sequence of the Escherichia coli K-12 genome corresponding to the 12.7-28.0 min region on the linkage map.</title>
        <authorList>
            <person name="Oshima T."/>
            <person name="Aiba H."/>
            <person name="Baba T."/>
            <person name="Fujita K."/>
            <person name="Hayashi K."/>
            <person name="Honjo A."/>
            <person name="Ikemoto K."/>
            <person name="Inada T."/>
            <person name="Itoh T."/>
            <person name="Kajihara M."/>
            <person name="Kanai K."/>
            <person name="Kashimoto K."/>
            <person name="Kimura S."/>
            <person name="Kitagawa M."/>
            <person name="Makino K."/>
            <person name="Masuda S."/>
            <person name="Miki T."/>
            <person name="Mizobuchi K."/>
            <person name="Mori H."/>
            <person name="Motomura K."/>
            <person name="Nakamura Y."/>
            <person name="Nashimoto H."/>
            <person name="Nishio Y."/>
            <person name="Saito N."/>
            <person name="Sampei G."/>
            <person name="Seki Y."/>
            <person name="Tagami H."/>
            <person name="Takemoto K."/>
            <person name="Wada C."/>
            <person name="Yamamoto Y."/>
            <person name="Yano M."/>
            <person name="Horiuchi T."/>
        </authorList>
    </citation>
    <scope>NUCLEOTIDE SEQUENCE [LARGE SCALE GENOMIC DNA]</scope>
    <source>
        <strain>K12 / W3110 / ATCC 27325 / DSM 5911</strain>
    </source>
</reference>
<reference key="2">
    <citation type="journal article" date="1997" name="Science">
        <title>The complete genome sequence of Escherichia coli K-12.</title>
        <authorList>
            <person name="Blattner F.R."/>
            <person name="Plunkett G. III"/>
            <person name="Bloch C.A."/>
            <person name="Perna N.T."/>
            <person name="Burland V."/>
            <person name="Riley M."/>
            <person name="Collado-Vides J."/>
            <person name="Glasner J.D."/>
            <person name="Rode C.K."/>
            <person name="Mayhew G.F."/>
            <person name="Gregor J."/>
            <person name="Davis N.W."/>
            <person name="Kirkpatrick H.A."/>
            <person name="Goeden M.A."/>
            <person name="Rose D.J."/>
            <person name="Mau B."/>
            <person name="Shao Y."/>
        </authorList>
    </citation>
    <scope>NUCLEOTIDE SEQUENCE [LARGE SCALE GENOMIC DNA]</scope>
    <source>
        <strain>K12 / MG1655 / ATCC 47076</strain>
    </source>
</reference>
<reference key="3">
    <citation type="journal article" date="2006" name="Mol. Syst. Biol.">
        <title>Highly accurate genome sequences of Escherichia coli K-12 strains MG1655 and W3110.</title>
        <authorList>
            <person name="Hayashi K."/>
            <person name="Morooka N."/>
            <person name="Yamamoto Y."/>
            <person name="Fujita K."/>
            <person name="Isono K."/>
            <person name="Choi S."/>
            <person name="Ohtsubo E."/>
            <person name="Baba T."/>
            <person name="Wanner B.L."/>
            <person name="Mori H."/>
            <person name="Horiuchi T."/>
        </authorList>
    </citation>
    <scope>NUCLEOTIDE SEQUENCE [LARGE SCALE GENOMIC DNA]</scope>
    <source>
        <strain>K12 / W3110 / ATCC 27325 / DSM 5911</strain>
    </source>
</reference>
<reference key="4">
    <citation type="journal article" date="2008" name="J. Mol. Biol.">
        <title>YccW is the m5C methyltransferase specific for 23S rRNA nucleotide 1962.</title>
        <authorList>
            <person name="Purta E."/>
            <person name="O'Connor M."/>
            <person name="Bujnicki J.M."/>
            <person name="Douthwaite S."/>
        </authorList>
    </citation>
    <scope>FUNCTION AS A METHYLTRANSFERASE</scope>
    <scope>CATALYTIC ACTIVITY</scope>
    <source>
        <strain>K12</strain>
    </source>
</reference>
<reference key="5">
    <citation type="journal article" date="2008" name="J. Mol. Biol.">
        <title>Crystal structure of the Escherichia coli 23S rRNA:m5C methyltransferase RlmI (YccW) reveals evolutionary links between RNA modification enzymes.</title>
        <authorList>
            <person name="Sunita S."/>
            <person name="Tkaczuk K.L."/>
            <person name="Purta E."/>
            <person name="Kasprzak J.M."/>
            <person name="Douthwaite S."/>
            <person name="Bujnicki J.M."/>
            <person name="Sivaraman J."/>
        </authorList>
    </citation>
    <scope>X-RAY CRYSTALLOGRAPHY (2.0 ANGSTROMS)</scope>
    <scope>SUBUNIT</scope>
</reference>
<dbReference type="EC" id="2.1.1.191"/>
<dbReference type="EMBL" id="U00096">
    <property type="protein sequence ID" value="AAC74053.2"/>
    <property type="molecule type" value="Genomic_DNA"/>
</dbReference>
<dbReference type="EMBL" id="AP009048">
    <property type="protein sequence ID" value="BAA35732.2"/>
    <property type="status" value="ALT_INIT"/>
    <property type="molecule type" value="Genomic_DNA"/>
</dbReference>
<dbReference type="PIR" id="F64837">
    <property type="entry name" value="F64837"/>
</dbReference>
<dbReference type="RefSeq" id="NP_415487.4">
    <property type="nucleotide sequence ID" value="NC_000913.3"/>
</dbReference>
<dbReference type="RefSeq" id="WP_000116297.1">
    <property type="nucleotide sequence ID" value="NZ_SSZK01000002.1"/>
</dbReference>
<dbReference type="PDB" id="3C0K">
    <property type="method" value="X-ray"/>
    <property type="resolution" value="2.00 A"/>
    <property type="chains" value="A/B=1-396"/>
</dbReference>
<dbReference type="PDBsum" id="3C0K"/>
<dbReference type="SMR" id="P75876"/>
<dbReference type="BioGRID" id="4259463">
    <property type="interactions" value="56"/>
</dbReference>
<dbReference type="DIP" id="DIP-11501N"/>
<dbReference type="FunCoup" id="P75876">
    <property type="interactions" value="480"/>
</dbReference>
<dbReference type="IntAct" id="P75876">
    <property type="interactions" value="12"/>
</dbReference>
<dbReference type="STRING" id="511145.b0967"/>
<dbReference type="jPOST" id="P75876"/>
<dbReference type="PaxDb" id="511145-b0967"/>
<dbReference type="EnsemblBacteria" id="AAC74053">
    <property type="protein sequence ID" value="AAC74053"/>
    <property type="gene ID" value="b0967"/>
</dbReference>
<dbReference type="GeneID" id="946691"/>
<dbReference type="KEGG" id="ecj:JW5898"/>
<dbReference type="KEGG" id="eco:b0967"/>
<dbReference type="KEGG" id="ecoc:C3026_05910"/>
<dbReference type="PATRIC" id="fig|511145.12.peg.1002"/>
<dbReference type="EchoBASE" id="EB3489"/>
<dbReference type="eggNOG" id="COG1092">
    <property type="taxonomic scope" value="Bacteria"/>
</dbReference>
<dbReference type="HOGENOM" id="CLU_014042_0_0_6"/>
<dbReference type="InParanoid" id="P75876"/>
<dbReference type="OMA" id="VMDVFDY"/>
<dbReference type="OrthoDB" id="9805492at2"/>
<dbReference type="PhylomeDB" id="P75876"/>
<dbReference type="BioCyc" id="EcoCyc:G6501-MONOMER"/>
<dbReference type="BioCyc" id="MetaCyc:G6501-MONOMER"/>
<dbReference type="BRENDA" id="2.1.1.191">
    <property type="organism ID" value="2026"/>
</dbReference>
<dbReference type="EvolutionaryTrace" id="P75876"/>
<dbReference type="PRO" id="PR:P75876"/>
<dbReference type="Proteomes" id="UP000000625">
    <property type="component" value="Chromosome"/>
</dbReference>
<dbReference type="GO" id="GO:0005737">
    <property type="term" value="C:cytoplasm"/>
    <property type="evidence" value="ECO:0000305"/>
    <property type="project" value="UniProtKB"/>
</dbReference>
<dbReference type="GO" id="GO:0005829">
    <property type="term" value="C:cytosol"/>
    <property type="evidence" value="ECO:0000314"/>
    <property type="project" value="EcoCyc"/>
</dbReference>
<dbReference type="GO" id="GO:0042803">
    <property type="term" value="F:protein homodimerization activity"/>
    <property type="evidence" value="ECO:0000314"/>
    <property type="project" value="EcoCyc"/>
</dbReference>
<dbReference type="GO" id="GO:0003723">
    <property type="term" value="F:RNA binding"/>
    <property type="evidence" value="ECO:0007669"/>
    <property type="project" value="UniProtKB-KW"/>
</dbReference>
<dbReference type="GO" id="GO:0016434">
    <property type="term" value="F:rRNA (cytosine) methyltransferase activity"/>
    <property type="evidence" value="ECO:0000314"/>
    <property type="project" value="UniProtKB"/>
</dbReference>
<dbReference type="GO" id="GO:0009383">
    <property type="term" value="F:rRNA (cytosine-C5-)-methyltransferase activity"/>
    <property type="evidence" value="ECO:0000314"/>
    <property type="project" value="EcoCyc"/>
</dbReference>
<dbReference type="GO" id="GO:0070475">
    <property type="term" value="P:rRNA base methylation"/>
    <property type="evidence" value="ECO:0000315"/>
    <property type="project" value="EcoCyc"/>
</dbReference>
<dbReference type="GO" id="GO:0031167">
    <property type="term" value="P:rRNA methylation"/>
    <property type="evidence" value="ECO:0000314"/>
    <property type="project" value="UniProtKB"/>
</dbReference>
<dbReference type="GO" id="GO:0044010">
    <property type="term" value="P:single-species biofilm formation"/>
    <property type="evidence" value="ECO:0000315"/>
    <property type="project" value="EcoCyc"/>
</dbReference>
<dbReference type="CDD" id="cd02440">
    <property type="entry name" value="AdoMet_MTases"/>
    <property type="match status" value="1"/>
</dbReference>
<dbReference type="CDD" id="cd21153">
    <property type="entry name" value="PUA_RlmI"/>
    <property type="match status" value="1"/>
</dbReference>
<dbReference type="CDD" id="cd11572">
    <property type="entry name" value="RlmI_M_like"/>
    <property type="match status" value="1"/>
</dbReference>
<dbReference type="FunFam" id="2.30.130.10:FF:000005">
    <property type="entry name" value="Ribosomal RNA large subunit methyltransferase I"/>
    <property type="match status" value="1"/>
</dbReference>
<dbReference type="FunFam" id="3.30.750.80:FF:000002">
    <property type="entry name" value="Ribosomal RNA large subunit methyltransferase I"/>
    <property type="match status" value="1"/>
</dbReference>
<dbReference type="FunFam" id="3.40.50.150:FF:000044">
    <property type="entry name" value="Ribosomal RNA large subunit methyltransferase I"/>
    <property type="match status" value="1"/>
</dbReference>
<dbReference type="Gene3D" id="2.30.130.10">
    <property type="entry name" value="PUA domain"/>
    <property type="match status" value="1"/>
</dbReference>
<dbReference type="Gene3D" id="3.30.750.80">
    <property type="entry name" value="RNA methyltransferase domain (HRMD) like"/>
    <property type="match status" value="1"/>
</dbReference>
<dbReference type="Gene3D" id="3.40.50.150">
    <property type="entry name" value="Vaccinia Virus protein VP39"/>
    <property type="match status" value="1"/>
</dbReference>
<dbReference type="HAMAP" id="MF_01857">
    <property type="entry name" value="23SrRNA_methyltr_I"/>
    <property type="match status" value="1"/>
</dbReference>
<dbReference type="InterPro" id="IPR002478">
    <property type="entry name" value="PUA"/>
</dbReference>
<dbReference type="InterPro" id="IPR015947">
    <property type="entry name" value="PUA-like_sf"/>
</dbReference>
<dbReference type="InterPro" id="IPR036974">
    <property type="entry name" value="PUA_sf"/>
</dbReference>
<dbReference type="InterPro" id="IPR023542">
    <property type="entry name" value="RLMI"/>
</dbReference>
<dbReference type="InterPro" id="IPR041532">
    <property type="entry name" value="RlmI-like_PUA"/>
</dbReference>
<dbReference type="InterPro" id="IPR019614">
    <property type="entry name" value="SAM-dep_methyl-trfase"/>
</dbReference>
<dbReference type="InterPro" id="IPR029063">
    <property type="entry name" value="SAM-dependent_MTases_sf"/>
</dbReference>
<dbReference type="NCBIfam" id="NF011707">
    <property type="entry name" value="PRK15128.1"/>
    <property type="match status" value="1"/>
</dbReference>
<dbReference type="PANTHER" id="PTHR42873">
    <property type="entry name" value="RIBOSOMAL RNA LARGE SUBUNIT METHYLTRANSFERASE"/>
    <property type="match status" value="1"/>
</dbReference>
<dbReference type="PANTHER" id="PTHR42873:SF1">
    <property type="entry name" value="S-ADENOSYLMETHIONINE-DEPENDENT METHYLTRANSFERASE DOMAIN-CONTAINING PROTEIN"/>
    <property type="match status" value="1"/>
</dbReference>
<dbReference type="Pfam" id="PF10672">
    <property type="entry name" value="Methyltrans_SAM"/>
    <property type="match status" value="1"/>
</dbReference>
<dbReference type="Pfam" id="PF17785">
    <property type="entry name" value="PUA_3"/>
    <property type="match status" value="1"/>
</dbReference>
<dbReference type="SMART" id="SM00359">
    <property type="entry name" value="PUA"/>
    <property type="match status" value="1"/>
</dbReference>
<dbReference type="SUPFAM" id="SSF88697">
    <property type="entry name" value="PUA domain-like"/>
    <property type="match status" value="1"/>
</dbReference>
<dbReference type="SUPFAM" id="SSF53335">
    <property type="entry name" value="S-adenosyl-L-methionine-dependent methyltransferases"/>
    <property type="match status" value="1"/>
</dbReference>
<dbReference type="PROSITE" id="PS50890">
    <property type="entry name" value="PUA"/>
    <property type="match status" value="1"/>
</dbReference>
<feature type="chain" id="PRO_0000213169" description="Ribosomal RNA large subunit methyltransferase I">
    <location>
        <begin position="1"/>
        <end position="396"/>
    </location>
</feature>
<feature type="domain" description="PUA">
    <location>
        <begin position="2"/>
        <end position="81"/>
    </location>
</feature>
<feature type="strand" evidence="4">
    <location>
        <begin position="4"/>
        <end position="7"/>
    </location>
</feature>
<feature type="helix" evidence="4">
    <location>
        <begin position="13"/>
        <end position="16"/>
    </location>
</feature>
<feature type="strand" evidence="4">
    <location>
        <begin position="20"/>
        <end position="23"/>
    </location>
</feature>
<feature type="helix" evidence="4">
    <location>
        <begin position="24"/>
        <end position="26"/>
    </location>
</feature>
<feature type="strand" evidence="4">
    <location>
        <begin position="27"/>
        <end position="32"/>
    </location>
</feature>
<feature type="strand" evidence="4">
    <location>
        <begin position="39"/>
        <end position="43"/>
    </location>
</feature>
<feature type="strand" evidence="4">
    <location>
        <begin position="49"/>
        <end position="55"/>
    </location>
</feature>
<feature type="strand" evidence="4">
    <location>
        <begin position="59"/>
        <end position="68"/>
    </location>
</feature>
<feature type="helix" evidence="4">
    <location>
        <begin position="76"/>
        <end position="97"/>
    </location>
</feature>
<feature type="strand" evidence="4">
    <location>
        <begin position="100"/>
        <end position="106"/>
    </location>
</feature>
<feature type="helix" evidence="4">
    <location>
        <begin position="107"/>
        <end position="110"/>
    </location>
</feature>
<feature type="strand" evidence="4">
    <location>
        <begin position="115"/>
        <end position="120"/>
    </location>
</feature>
<feature type="strand" evidence="4">
    <location>
        <begin position="123"/>
        <end position="128"/>
    </location>
</feature>
<feature type="helix" evidence="4">
    <location>
        <begin position="131"/>
        <end position="135"/>
    </location>
</feature>
<feature type="helix" evidence="4">
    <location>
        <begin position="137"/>
        <end position="147"/>
    </location>
</feature>
<feature type="strand" evidence="4">
    <location>
        <begin position="151"/>
        <end position="157"/>
    </location>
</feature>
<feature type="helix" evidence="4">
    <location>
        <begin position="161"/>
        <end position="164"/>
    </location>
</feature>
<feature type="strand" evidence="4">
    <location>
        <begin position="170"/>
        <end position="176"/>
    </location>
</feature>
<feature type="strand" evidence="4">
    <location>
        <begin position="181"/>
        <end position="187"/>
    </location>
</feature>
<feature type="strand" evidence="4">
    <location>
        <begin position="190"/>
        <end position="194"/>
    </location>
</feature>
<feature type="turn" evidence="4">
    <location>
        <begin position="196"/>
        <end position="198"/>
    </location>
</feature>
<feature type="helix" evidence="4">
    <location>
        <begin position="206"/>
        <end position="208"/>
    </location>
</feature>
<feature type="helix" evidence="4">
    <location>
        <begin position="209"/>
        <end position="218"/>
    </location>
</feature>
<feature type="strand" evidence="4">
    <location>
        <begin position="223"/>
        <end position="228"/>
    </location>
</feature>
<feature type="helix" evidence="4">
    <location>
        <begin position="234"/>
        <end position="240"/>
    </location>
</feature>
<feature type="strand" evidence="4">
    <location>
        <begin position="244"/>
        <end position="251"/>
    </location>
</feature>
<feature type="helix" evidence="4">
    <location>
        <begin position="253"/>
        <end position="265"/>
    </location>
</feature>
<feature type="helix" evidence="4">
    <location>
        <begin position="270"/>
        <end position="272"/>
    </location>
</feature>
<feature type="strand" evidence="4">
    <location>
        <begin position="273"/>
        <end position="278"/>
    </location>
</feature>
<feature type="helix" evidence="4">
    <location>
        <begin position="280"/>
        <end position="289"/>
    </location>
</feature>
<feature type="strand" evidence="4">
    <location>
        <begin position="294"/>
        <end position="299"/>
    </location>
</feature>
<feature type="turn" evidence="4">
    <location>
        <begin position="304"/>
        <end position="306"/>
    </location>
</feature>
<feature type="strand" evidence="4">
    <location>
        <begin position="308"/>
        <end position="312"/>
    </location>
</feature>
<feature type="helix" evidence="4">
    <location>
        <begin position="317"/>
        <end position="327"/>
    </location>
</feature>
<feature type="strand" evidence="4">
    <location>
        <begin position="329"/>
        <end position="339"/>
    </location>
</feature>
<feature type="helix" evidence="4">
    <location>
        <begin position="346"/>
        <end position="360"/>
    </location>
</feature>
<feature type="strand" evidence="4">
    <location>
        <begin position="364"/>
        <end position="371"/>
    </location>
</feature>
<feature type="helix" evidence="4">
    <location>
        <begin position="383"/>
        <end position="385"/>
    </location>
</feature>
<feature type="strand" evidence="4">
    <location>
        <begin position="389"/>
        <end position="395"/>
    </location>
</feature>
<evidence type="ECO:0000269" key="1">
    <source>
    </source>
</evidence>
<evidence type="ECO:0000269" key="2">
    <source>
    </source>
</evidence>
<evidence type="ECO:0000305" key="3"/>
<evidence type="ECO:0007829" key="4">
    <source>
        <dbReference type="PDB" id="3C0K"/>
    </source>
</evidence>